<name>HIS6_NEIG2</name>
<dbReference type="EC" id="4.3.2.10" evidence="1"/>
<dbReference type="EMBL" id="CP001050">
    <property type="protein sequence ID" value="ACF29036.1"/>
    <property type="molecule type" value="Genomic_DNA"/>
</dbReference>
<dbReference type="RefSeq" id="WP_003690707.1">
    <property type="nucleotide sequence ID" value="NC_011035.1"/>
</dbReference>
<dbReference type="SMR" id="B4RJN3"/>
<dbReference type="GeneID" id="66752542"/>
<dbReference type="KEGG" id="ngk:NGK_0343"/>
<dbReference type="HOGENOM" id="CLU_048577_4_0_4"/>
<dbReference type="UniPathway" id="UPA00031">
    <property type="reaction ID" value="UER00010"/>
</dbReference>
<dbReference type="Proteomes" id="UP000002564">
    <property type="component" value="Chromosome"/>
</dbReference>
<dbReference type="GO" id="GO:0005737">
    <property type="term" value="C:cytoplasm"/>
    <property type="evidence" value="ECO:0007669"/>
    <property type="project" value="UniProtKB-SubCell"/>
</dbReference>
<dbReference type="GO" id="GO:0000107">
    <property type="term" value="F:imidazoleglycerol-phosphate synthase activity"/>
    <property type="evidence" value="ECO:0007669"/>
    <property type="project" value="UniProtKB-UniRule"/>
</dbReference>
<dbReference type="GO" id="GO:0016829">
    <property type="term" value="F:lyase activity"/>
    <property type="evidence" value="ECO:0007669"/>
    <property type="project" value="UniProtKB-KW"/>
</dbReference>
<dbReference type="GO" id="GO:0000105">
    <property type="term" value="P:L-histidine biosynthetic process"/>
    <property type="evidence" value="ECO:0007669"/>
    <property type="project" value="UniProtKB-UniRule"/>
</dbReference>
<dbReference type="CDD" id="cd04731">
    <property type="entry name" value="HisF"/>
    <property type="match status" value="1"/>
</dbReference>
<dbReference type="FunFam" id="3.20.20.70:FF:000006">
    <property type="entry name" value="Imidazole glycerol phosphate synthase subunit HisF"/>
    <property type="match status" value="1"/>
</dbReference>
<dbReference type="Gene3D" id="3.20.20.70">
    <property type="entry name" value="Aldolase class I"/>
    <property type="match status" value="1"/>
</dbReference>
<dbReference type="HAMAP" id="MF_01013">
    <property type="entry name" value="HisF"/>
    <property type="match status" value="1"/>
</dbReference>
<dbReference type="InterPro" id="IPR013785">
    <property type="entry name" value="Aldolase_TIM"/>
</dbReference>
<dbReference type="InterPro" id="IPR006062">
    <property type="entry name" value="His_biosynth"/>
</dbReference>
<dbReference type="InterPro" id="IPR004651">
    <property type="entry name" value="HisF"/>
</dbReference>
<dbReference type="InterPro" id="IPR050064">
    <property type="entry name" value="IGPS_HisA/HisF"/>
</dbReference>
<dbReference type="InterPro" id="IPR011060">
    <property type="entry name" value="RibuloseP-bd_barrel"/>
</dbReference>
<dbReference type="NCBIfam" id="TIGR00735">
    <property type="entry name" value="hisF"/>
    <property type="match status" value="1"/>
</dbReference>
<dbReference type="PANTHER" id="PTHR21235:SF2">
    <property type="entry name" value="IMIDAZOLE GLYCEROL PHOSPHATE SYNTHASE HISHF"/>
    <property type="match status" value="1"/>
</dbReference>
<dbReference type="PANTHER" id="PTHR21235">
    <property type="entry name" value="IMIDAZOLE GLYCEROL PHOSPHATE SYNTHASE SUBUNIT HISF/H IGP SYNTHASE SUBUNIT HISF/H"/>
    <property type="match status" value="1"/>
</dbReference>
<dbReference type="Pfam" id="PF00977">
    <property type="entry name" value="His_biosynth"/>
    <property type="match status" value="1"/>
</dbReference>
<dbReference type="SUPFAM" id="SSF51366">
    <property type="entry name" value="Ribulose-phoshate binding barrel"/>
    <property type="match status" value="1"/>
</dbReference>
<sequence length="255" mass="27058">MALAKRIIPCLDVKDGRVVKGVNFIGLRDAGDPVEAAKRYNGEGADELTFLDITASSDNRDTILHIIEEVAGQVFIPLTVGGGVRTVADIRRLLNAGADKVSINTAAVTRPDLINEAAGFFGSQAIVAAVDAKAVNPENTRWEIFTHGGRNPTGLDAVEWAVEMQKRGAGEILLTGMDRDGTKQGFNLPLTRAVAEAVDIPVIASGGVGNVRHLIEGITEGKADAVLAAGIFHFGEIAIREAKRTMREAGIEVRL</sequence>
<organism>
    <name type="scientific">Neisseria gonorrhoeae (strain NCCP11945)</name>
    <dbReference type="NCBI Taxonomy" id="521006"/>
    <lineage>
        <taxon>Bacteria</taxon>
        <taxon>Pseudomonadati</taxon>
        <taxon>Pseudomonadota</taxon>
        <taxon>Betaproteobacteria</taxon>
        <taxon>Neisseriales</taxon>
        <taxon>Neisseriaceae</taxon>
        <taxon>Neisseria</taxon>
    </lineage>
</organism>
<proteinExistence type="inferred from homology"/>
<evidence type="ECO:0000255" key="1">
    <source>
        <dbReference type="HAMAP-Rule" id="MF_01013"/>
    </source>
</evidence>
<accession>B4RJN3</accession>
<comment type="function">
    <text evidence="1">IGPS catalyzes the conversion of PRFAR and glutamine to IGP, AICAR and glutamate. The HisF subunit catalyzes the cyclization activity that produces IGP and AICAR from PRFAR using the ammonia provided by the HisH subunit.</text>
</comment>
<comment type="catalytic activity">
    <reaction evidence="1">
        <text>5-[(5-phospho-1-deoxy-D-ribulos-1-ylimino)methylamino]-1-(5-phospho-beta-D-ribosyl)imidazole-4-carboxamide + L-glutamine = D-erythro-1-(imidazol-4-yl)glycerol 3-phosphate + 5-amino-1-(5-phospho-beta-D-ribosyl)imidazole-4-carboxamide + L-glutamate + H(+)</text>
        <dbReference type="Rhea" id="RHEA:24793"/>
        <dbReference type="ChEBI" id="CHEBI:15378"/>
        <dbReference type="ChEBI" id="CHEBI:29985"/>
        <dbReference type="ChEBI" id="CHEBI:58278"/>
        <dbReference type="ChEBI" id="CHEBI:58359"/>
        <dbReference type="ChEBI" id="CHEBI:58475"/>
        <dbReference type="ChEBI" id="CHEBI:58525"/>
        <dbReference type="EC" id="4.3.2.10"/>
    </reaction>
</comment>
<comment type="pathway">
    <text evidence="1">Amino-acid biosynthesis; L-histidine biosynthesis; L-histidine from 5-phospho-alpha-D-ribose 1-diphosphate: step 5/9.</text>
</comment>
<comment type="subunit">
    <text evidence="1">Heterodimer of HisH and HisF.</text>
</comment>
<comment type="subcellular location">
    <subcellularLocation>
        <location evidence="1">Cytoplasm</location>
    </subcellularLocation>
</comment>
<comment type="similarity">
    <text evidence="1">Belongs to the HisA/HisF family.</text>
</comment>
<keyword id="KW-0028">Amino-acid biosynthesis</keyword>
<keyword id="KW-0963">Cytoplasm</keyword>
<keyword id="KW-0368">Histidine biosynthesis</keyword>
<keyword id="KW-0456">Lyase</keyword>
<reference key="1">
    <citation type="journal article" date="2008" name="J. Bacteriol.">
        <title>Complete genome sequence of Neisseria gonorrhoeae NCCP11945.</title>
        <authorList>
            <person name="Chung G.T."/>
            <person name="Yoo J.S."/>
            <person name="Oh H.B."/>
            <person name="Lee Y.S."/>
            <person name="Cha S.H."/>
            <person name="Kim S.J."/>
            <person name="Yoo C.K."/>
        </authorList>
    </citation>
    <scope>NUCLEOTIDE SEQUENCE [LARGE SCALE GENOMIC DNA]</scope>
    <source>
        <strain>NCCP11945</strain>
    </source>
</reference>
<protein>
    <recommendedName>
        <fullName evidence="1">Imidazole glycerol phosphate synthase subunit HisF</fullName>
        <ecNumber evidence="1">4.3.2.10</ecNumber>
    </recommendedName>
    <alternativeName>
        <fullName evidence="1">IGP synthase cyclase subunit</fullName>
    </alternativeName>
    <alternativeName>
        <fullName evidence="1">IGP synthase subunit HisF</fullName>
    </alternativeName>
    <alternativeName>
        <fullName evidence="1">ImGP synthase subunit HisF</fullName>
        <shortName evidence="1">IGPS subunit HisF</shortName>
    </alternativeName>
</protein>
<gene>
    <name evidence="1" type="primary">hisF</name>
    <name type="ordered locus">NGK_0343</name>
</gene>
<feature type="chain" id="PRO_1000190585" description="Imidazole glycerol phosphate synthase subunit HisF">
    <location>
        <begin position="1"/>
        <end position="255"/>
    </location>
</feature>
<feature type="active site" evidence="1">
    <location>
        <position position="12"/>
    </location>
</feature>
<feature type="active site" evidence="1">
    <location>
        <position position="131"/>
    </location>
</feature>